<keyword id="KW-0997">Cell inner membrane</keyword>
<keyword id="KW-1003">Cell membrane</keyword>
<keyword id="KW-0378">Hydrolase</keyword>
<keyword id="KW-0472">Membrane</keyword>
<keyword id="KW-0479">Metal-binding</keyword>
<keyword id="KW-0482">Metalloprotease</keyword>
<keyword id="KW-0645">Protease</keyword>
<keyword id="KW-0812">Transmembrane</keyword>
<keyword id="KW-1133">Transmembrane helix</keyword>
<keyword id="KW-0862">Zinc</keyword>
<name>HTPX_ECOL5</name>
<proteinExistence type="inferred from homology"/>
<accession>Q0TH03</accession>
<gene>
    <name evidence="1" type="primary">htpX</name>
    <name type="ordered locus">ECP_1773</name>
</gene>
<protein>
    <recommendedName>
        <fullName evidence="1">Protease HtpX</fullName>
        <ecNumber evidence="1">3.4.24.-</ecNumber>
    </recommendedName>
    <alternativeName>
        <fullName evidence="1">Heat shock protein HtpX</fullName>
    </alternativeName>
</protein>
<organism>
    <name type="scientific">Escherichia coli O6:K15:H31 (strain 536 / UPEC)</name>
    <dbReference type="NCBI Taxonomy" id="362663"/>
    <lineage>
        <taxon>Bacteria</taxon>
        <taxon>Pseudomonadati</taxon>
        <taxon>Pseudomonadota</taxon>
        <taxon>Gammaproteobacteria</taxon>
        <taxon>Enterobacterales</taxon>
        <taxon>Enterobacteriaceae</taxon>
        <taxon>Escherichia</taxon>
    </lineage>
</organism>
<dbReference type="EC" id="3.4.24.-" evidence="1"/>
<dbReference type="EMBL" id="CP000247">
    <property type="protein sequence ID" value="ABG69776.1"/>
    <property type="molecule type" value="Genomic_DNA"/>
</dbReference>
<dbReference type="RefSeq" id="WP_000984517.1">
    <property type="nucleotide sequence ID" value="NC_008253.1"/>
</dbReference>
<dbReference type="SMR" id="Q0TH03"/>
<dbReference type="MEROPS" id="M48.002"/>
<dbReference type="GeneID" id="93776079"/>
<dbReference type="KEGG" id="ecp:ECP_1773"/>
<dbReference type="HOGENOM" id="CLU_042266_1_0_6"/>
<dbReference type="Proteomes" id="UP000009182">
    <property type="component" value="Chromosome"/>
</dbReference>
<dbReference type="GO" id="GO:0005886">
    <property type="term" value="C:plasma membrane"/>
    <property type="evidence" value="ECO:0007669"/>
    <property type="project" value="UniProtKB-SubCell"/>
</dbReference>
<dbReference type="GO" id="GO:0004222">
    <property type="term" value="F:metalloendopeptidase activity"/>
    <property type="evidence" value="ECO:0007669"/>
    <property type="project" value="UniProtKB-UniRule"/>
</dbReference>
<dbReference type="GO" id="GO:0008270">
    <property type="term" value="F:zinc ion binding"/>
    <property type="evidence" value="ECO:0007669"/>
    <property type="project" value="UniProtKB-UniRule"/>
</dbReference>
<dbReference type="GO" id="GO:0006508">
    <property type="term" value="P:proteolysis"/>
    <property type="evidence" value="ECO:0007669"/>
    <property type="project" value="UniProtKB-KW"/>
</dbReference>
<dbReference type="CDD" id="cd07335">
    <property type="entry name" value="M48B_HtpX_like"/>
    <property type="match status" value="1"/>
</dbReference>
<dbReference type="FunFam" id="3.30.2010.10:FF:000001">
    <property type="entry name" value="Protease HtpX"/>
    <property type="match status" value="1"/>
</dbReference>
<dbReference type="Gene3D" id="3.30.2010.10">
    <property type="entry name" value="Metalloproteases ('zincins'), catalytic domain"/>
    <property type="match status" value="1"/>
</dbReference>
<dbReference type="HAMAP" id="MF_00188">
    <property type="entry name" value="Pept_M48_protease_HtpX"/>
    <property type="match status" value="1"/>
</dbReference>
<dbReference type="InterPro" id="IPR050083">
    <property type="entry name" value="HtpX_protease"/>
</dbReference>
<dbReference type="InterPro" id="IPR022919">
    <property type="entry name" value="Pept_M48_protease_HtpX"/>
</dbReference>
<dbReference type="InterPro" id="IPR001915">
    <property type="entry name" value="Peptidase_M48"/>
</dbReference>
<dbReference type="NCBIfam" id="NF003965">
    <property type="entry name" value="PRK05457.1"/>
    <property type="match status" value="1"/>
</dbReference>
<dbReference type="PANTHER" id="PTHR43221">
    <property type="entry name" value="PROTEASE HTPX"/>
    <property type="match status" value="1"/>
</dbReference>
<dbReference type="PANTHER" id="PTHR43221:SF1">
    <property type="entry name" value="PROTEASE HTPX"/>
    <property type="match status" value="1"/>
</dbReference>
<dbReference type="Pfam" id="PF01435">
    <property type="entry name" value="Peptidase_M48"/>
    <property type="match status" value="1"/>
</dbReference>
<sequence>MMRIALFLLTNLAVMVVFGLVLSLTGIQSSSVQGLMIMALLFGFGGSFVSLLMSKWMALRSVGGEVIEQPRNERERWLVNTVATQARQAGIAMPQVAIYHAPDINAFATGARRDASLVAVSTGLLQNMSPDEAEAVIAHEISHIANGDMVTMTLIQGVVNTFVIFISRILAQLAAGFMGGNRDEGEESNGNPLIYFAVATVLELVFGILASIITMWFSRHREFHADAGSAKLVGREKMIAALQRLKTSYEPQEATSMMAFCINGKSKSLSELFMTHPPLDKRIEALRTGEYLK</sequence>
<reference key="1">
    <citation type="journal article" date="2006" name="Mol. Microbiol.">
        <title>Role of pathogenicity island-associated integrases in the genome plasticity of uropathogenic Escherichia coli strain 536.</title>
        <authorList>
            <person name="Hochhut B."/>
            <person name="Wilde C."/>
            <person name="Balling G."/>
            <person name="Middendorf B."/>
            <person name="Dobrindt U."/>
            <person name="Brzuszkiewicz E."/>
            <person name="Gottschalk G."/>
            <person name="Carniel E."/>
            <person name="Hacker J."/>
        </authorList>
    </citation>
    <scope>NUCLEOTIDE SEQUENCE [LARGE SCALE GENOMIC DNA]</scope>
    <source>
        <strain>536 / UPEC</strain>
    </source>
</reference>
<evidence type="ECO:0000255" key="1">
    <source>
        <dbReference type="HAMAP-Rule" id="MF_00188"/>
    </source>
</evidence>
<feature type="chain" id="PRO_1000020863" description="Protease HtpX">
    <location>
        <begin position="1"/>
        <end position="293"/>
    </location>
</feature>
<feature type="transmembrane region" description="Helical" evidence="1">
    <location>
        <begin position="4"/>
        <end position="24"/>
    </location>
</feature>
<feature type="transmembrane region" description="Helical" evidence="1">
    <location>
        <begin position="34"/>
        <end position="54"/>
    </location>
</feature>
<feature type="transmembrane region" description="Helical" evidence="1">
    <location>
        <begin position="158"/>
        <end position="178"/>
    </location>
</feature>
<feature type="transmembrane region" description="Helical" evidence="1">
    <location>
        <begin position="193"/>
        <end position="213"/>
    </location>
</feature>
<feature type="active site" evidence="1">
    <location>
        <position position="140"/>
    </location>
</feature>
<feature type="binding site" evidence="1">
    <location>
        <position position="139"/>
    </location>
    <ligand>
        <name>Zn(2+)</name>
        <dbReference type="ChEBI" id="CHEBI:29105"/>
        <note>catalytic</note>
    </ligand>
</feature>
<feature type="binding site" evidence="1">
    <location>
        <position position="143"/>
    </location>
    <ligand>
        <name>Zn(2+)</name>
        <dbReference type="ChEBI" id="CHEBI:29105"/>
        <note>catalytic</note>
    </ligand>
</feature>
<feature type="binding site" evidence="1">
    <location>
        <position position="222"/>
    </location>
    <ligand>
        <name>Zn(2+)</name>
        <dbReference type="ChEBI" id="CHEBI:29105"/>
        <note>catalytic</note>
    </ligand>
</feature>
<comment type="cofactor">
    <cofactor evidence="1">
        <name>Zn(2+)</name>
        <dbReference type="ChEBI" id="CHEBI:29105"/>
    </cofactor>
    <text evidence="1">Binds 1 zinc ion per subunit.</text>
</comment>
<comment type="subcellular location">
    <subcellularLocation>
        <location evidence="1">Cell inner membrane</location>
        <topology evidence="1">Multi-pass membrane protein</topology>
    </subcellularLocation>
</comment>
<comment type="similarity">
    <text evidence="1">Belongs to the peptidase M48B family.</text>
</comment>